<comment type="function">
    <text evidence="1">Catalyzes the attachment of isoleucine to tRNA(Ile). As IleRS can inadvertently accommodate and process structurally similar amino acids such as valine, to avoid such errors it has two additional distinct tRNA(Ile)-dependent editing activities. One activity is designated as 'pretransfer' editing and involves the hydrolysis of activated Val-AMP. The other activity is designated 'posttransfer' editing and involves deacylation of mischarged Val-tRNA(Ile).</text>
</comment>
<comment type="catalytic activity">
    <reaction evidence="1">
        <text>tRNA(Ile) + L-isoleucine + ATP = L-isoleucyl-tRNA(Ile) + AMP + diphosphate</text>
        <dbReference type="Rhea" id="RHEA:11060"/>
        <dbReference type="Rhea" id="RHEA-COMP:9666"/>
        <dbReference type="Rhea" id="RHEA-COMP:9695"/>
        <dbReference type="ChEBI" id="CHEBI:30616"/>
        <dbReference type="ChEBI" id="CHEBI:33019"/>
        <dbReference type="ChEBI" id="CHEBI:58045"/>
        <dbReference type="ChEBI" id="CHEBI:78442"/>
        <dbReference type="ChEBI" id="CHEBI:78528"/>
        <dbReference type="ChEBI" id="CHEBI:456215"/>
        <dbReference type="EC" id="6.1.1.5"/>
    </reaction>
</comment>
<comment type="cofactor">
    <cofactor evidence="1">
        <name>Zn(2+)</name>
        <dbReference type="ChEBI" id="CHEBI:29105"/>
    </cofactor>
    <text evidence="1">Binds 1 zinc ion per subunit.</text>
</comment>
<comment type="subunit">
    <text evidence="1">Monomer.</text>
</comment>
<comment type="subcellular location">
    <subcellularLocation>
        <location evidence="1">Cytoplasm</location>
    </subcellularLocation>
</comment>
<comment type="domain">
    <text evidence="1">IleRS has two distinct active sites: one for aminoacylation and one for editing. The misactivated valine is translocated from the active site to the editing site, which sterically excludes the correctly activated isoleucine. The single editing site contains two valyl binding pockets, one specific for each substrate (Val-AMP or Val-tRNA(Ile)).</text>
</comment>
<comment type="similarity">
    <text evidence="1">Belongs to the class-I aminoacyl-tRNA synthetase family. IleS type 1 subfamily.</text>
</comment>
<name>SYI_STRMU</name>
<organism>
    <name type="scientific">Streptococcus mutans serotype c (strain ATCC 700610 / UA159)</name>
    <dbReference type="NCBI Taxonomy" id="210007"/>
    <lineage>
        <taxon>Bacteria</taxon>
        <taxon>Bacillati</taxon>
        <taxon>Bacillota</taxon>
        <taxon>Bacilli</taxon>
        <taxon>Lactobacillales</taxon>
        <taxon>Streptococcaceae</taxon>
        <taxon>Streptococcus</taxon>
    </lineage>
</organism>
<dbReference type="EC" id="6.1.1.5" evidence="1"/>
<dbReference type="EMBL" id="AE014133">
    <property type="protein sequence ID" value="AAN58300.1"/>
    <property type="molecule type" value="Genomic_DNA"/>
</dbReference>
<dbReference type="RefSeq" id="NP_720994.1">
    <property type="nucleotide sequence ID" value="NC_004350.2"/>
</dbReference>
<dbReference type="RefSeq" id="WP_002262075.1">
    <property type="nucleotide sequence ID" value="NC_004350.2"/>
</dbReference>
<dbReference type="SMR" id="Q8DVD3"/>
<dbReference type="STRING" id="210007.SMU_558"/>
<dbReference type="KEGG" id="smu:SMU_558"/>
<dbReference type="PATRIC" id="fig|210007.7.peg.493"/>
<dbReference type="eggNOG" id="COG0060">
    <property type="taxonomic scope" value="Bacteria"/>
</dbReference>
<dbReference type="HOGENOM" id="CLU_001493_7_1_9"/>
<dbReference type="OrthoDB" id="9810365at2"/>
<dbReference type="PhylomeDB" id="Q8DVD3"/>
<dbReference type="Proteomes" id="UP000002512">
    <property type="component" value="Chromosome"/>
</dbReference>
<dbReference type="GO" id="GO:0005829">
    <property type="term" value="C:cytosol"/>
    <property type="evidence" value="ECO:0007669"/>
    <property type="project" value="TreeGrafter"/>
</dbReference>
<dbReference type="GO" id="GO:0002161">
    <property type="term" value="F:aminoacyl-tRNA deacylase activity"/>
    <property type="evidence" value="ECO:0007669"/>
    <property type="project" value="InterPro"/>
</dbReference>
<dbReference type="GO" id="GO:0005524">
    <property type="term" value="F:ATP binding"/>
    <property type="evidence" value="ECO:0007669"/>
    <property type="project" value="UniProtKB-UniRule"/>
</dbReference>
<dbReference type="GO" id="GO:0004822">
    <property type="term" value="F:isoleucine-tRNA ligase activity"/>
    <property type="evidence" value="ECO:0007669"/>
    <property type="project" value="UniProtKB-UniRule"/>
</dbReference>
<dbReference type="GO" id="GO:0000049">
    <property type="term" value="F:tRNA binding"/>
    <property type="evidence" value="ECO:0007669"/>
    <property type="project" value="InterPro"/>
</dbReference>
<dbReference type="GO" id="GO:0008270">
    <property type="term" value="F:zinc ion binding"/>
    <property type="evidence" value="ECO:0007669"/>
    <property type="project" value="UniProtKB-UniRule"/>
</dbReference>
<dbReference type="GO" id="GO:0006428">
    <property type="term" value="P:isoleucyl-tRNA aminoacylation"/>
    <property type="evidence" value="ECO:0007669"/>
    <property type="project" value="UniProtKB-UniRule"/>
</dbReference>
<dbReference type="CDD" id="cd07960">
    <property type="entry name" value="Anticodon_Ia_Ile_BEm"/>
    <property type="match status" value="1"/>
</dbReference>
<dbReference type="CDD" id="cd00818">
    <property type="entry name" value="IleRS_core"/>
    <property type="match status" value="1"/>
</dbReference>
<dbReference type="FunFam" id="1.10.10.830:FF:000001">
    <property type="entry name" value="Isoleucine--tRNA ligase"/>
    <property type="match status" value="1"/>
</dbReference>
<dbReference type="FunFam" id="1.10.730.20:FF:000001">
    <property type="entry name" value="Isoleucine--tRNA ligase"/>
    <property type="match status" value="1"/>
</dbReference>
<dbReference type="FunFam" id="3.40.50.620:FF:000152">
    <property type="entry name" value="Isoleucine--tRNA ligase"/>
    <property type="match status" value="1"/>
</dbReference>
<dbReference type="FunFam" id="3.90.740.10:FF:000006">
    <property type="entry name" value="Isoleucine--tRNA ligase"/>
    <property type="match status" value="1"/>
</dbReference>
<dbReference type="Gene3D" id="1.10.730.20">
    <property type="match status" value="1"/>
</dbReference>
<dbReference type="Gene3D" id="3.40.50.620">
    <property type="entry name" value="HUPs"/>
    <property type="match status" value="2"/>
</dbReference>
<dbReference type="Gene3D" id="1.10.10.830">
    <property type="entry name" value="Ile-tRNA synthetase CP2 domain-like"/>
    <property type="match status" value="1"/>
</dbReference>
<dbReference type="Gene3D" id="3.90.740.10">
    <property type="entry name" value="Valyl/Leucyl/Isoleucyl-tRNA synthetase, editing domain"/>
    <property type="match status" value="1"/>
</dbReference>
<dbReference type="HAMAP" id="MF_02002">
    <property type="entry name" value="Ile_tRNA_synth_type1"/>
    <property type="match status" value="1"/>
</dbReference>
<dbReference type="InterPro" id="IPR001412">
    <property type="entry name" value="aa-tRNA-synth_I_CS"/>
</dbReference>
<dbReference type="InterPro" id="IPR002300">
    <property type="entry name" value="aa-tRNA-synth_Ia"/>
</dbReference>
<dbReference type="InterPro" id="IPR033708">
    <property type="entry name" value="Anticodon_Ile_BEm"/>
</dbReference>
<dbReference type="InterPro" id="IPR002301">
    <property type="entry name" value="Ile-tRNA-ligase"/>
</dbReference>
<dbReference type="InterPro" id="IPR023585">
    <property type="entry name" value="Ile-tRNA-ligase_type1"/>
</dbReference>
<dbReference type="InterPro" id="IPR050081">
    <property type="entry name" value="Ile-tRNA_ligase"/>
</dbReference>
<dbReference type="InterPro" id="IPR013155">
    <property type="entry name" value="M/V/L/I-tRNA-synth_anticd-bd"/>
</dbReference>
<dbReference type="InterPro" id="IPR014729">
    <property type="entry name" value="Rossmann-like_a/b/a_fold"/>
</dbReference>
<dbReference type="InterPro" id="IPR009080">
    <property type="entry name" value="tRNAsynth_Ia_anticodon-bd"/>
</dbReference>
<dbReference type="InterPro" id="IPR009008">
    <property type="entry name" value="Val/Leu/Ile-tRNA-synth_edit"/>
</dbReference>
<dbReference type="InterPro" id="IPR010663">
    <property type="entry name" value="Znf_FPG/IleRS"/>
</dbReference>
<dbReference type="NCBIfam" id="TIGR00392">
    <property type="entry name" value="ileS"/>
    <property type="match status" value="1"/>
</dbReference>
<dbReference type="PANTHER" id="PTHR42765:SF1">
    <property type="entry name" value="ISOLEUCINE--TRNA LIGASE, MITOCHONDRIAL"/>
    <property type="match status" value="1"/>
</dbReference>
<dbReference type="PANTHER" id="PTHR42765">
    <property type="entry name" value="SOLEUCYL-TRNA SYNTHETASE"/>
    <property type="match status" value="1"/>
</dbReference>
<dbReference type="Pfam" id="PF08264">
    <property type="entry name" value="Anticodon_1"/>
    <property type="match status" value="1"/>
</dbReference>
<dbReference type="Pfam" id="PF00133">
    <property type="entry name" value="tRNA-synt_1"/>
    <property type="match status" value="1"/>
</dbReference>
<dbReference type="Pfam" id="PF06827">
    <property type="entry name" value="zf-FPG_IleRS"/>
    <property type="match status" value="1"/>
</dbReference>
<dbReference type="PRINTS" id="PR00984">
    <property type="entry name" value="TRNASYNTHILE"/>
</dbReference>
<dbReference type="SUPFAM" id="SSF47323">
    <property type="entry name" value="Anticodon-binding domain of a subclass of class I aminoacyl-tRNA synthetases"/>
    <property type="match status" value="1"/>
</dbReference>
<dbReference type="SUPFAM" id="SSF52374">
    <property type="entry name" value="Nucleotidylyl transferase"/>
    <property type="match status" value="1"/>
</dbReference>
<dbReference type="SUPFAM" id="SSF50677">
    <property type="entry name" value="ValRS/IleRS/LeuRS editing domain"/>
    <property type="match status" value="1"/>
</dbReference>
<dbReference type="PROSITE" id="PS00178">
    <property type="entry name" value="AA_TRNA_LIGASE_I"/>
    <property type="match status" value="1"/>
</dbReference>
<gene>
    <name evidence="1" type="primary">ileS</name>
    <name type="ordered locus">SMU_558</name>
</gene>
<evidence type="ECO:0000255" key="1">
    <source>
        <dbReference type="HAMAP-Rule" id="MF_02002"/>
    </source>
</evidence>
<keyword id="KW-0030">Aminoacyl-tRNA synthetase</keyword>
<keyword id="KW-0067">ATP-binding</keyword>
<keyword id="KW-0963">Cytoplasm</keyword>
<keyword id="KW-0436">Ligase</keyword>
<keyword id="KW-0479">Metal-binding</keyword>
<keyword id="KW-0547">Nucleotide-binding</keyword>
<keyword id="KW-0648">Protein biosynthesis</keyword>
<keyword id="KW-1185">Reference proteome</keyword>
<keyword id="KW-0862">Zinc</keyword>
<protein>
    <recommendedName>
        <fullName evidence="1">Isoleucine--tRNA ligase</fullName>
        <ecNumber evidence="1">6.1.1.5</ecNumber>
    </recommendedName>
    <alternativeName>
        <fullName evidence="1">Isoleucyl-tRNA synthetase</fullName>
        <shortName evidence="1">IleRS</shortName>
    </alternativeName>
</protein>
<reference key="1">
    <citation type="journal article" date="2002" name="Proc. Natl. Acad. Sci. U.S.A.">
        <title>Genome sequence of Streptococcus mutans UA159, a cariogenic dental pathogen.</title>
        <authorList>
            <person name="Ajdic D.J."/>
            <person name="McShan W.M."/>
            <person name="McLaughlin R.E."/>
            <person name="Savic G."/>
            <person name="Chang J."/>
            <person name="Carson M.B."/>
            <person name="Primeaux C."/>
            <person name="Tian R."/>
            <person name="Kenton S."/>
            <person name="Jia H.G."/>
            <person name="Lin S.P."/>
            <person name="Qian Y."/>
            <person name="Li S."/>
            <person name="Zhu H."/>
            <person name="Najar F.Z."/>
            <person name="Lai H."/>
            <person name="White J."/>
            <person name="Roe B.A."/>
            <person name="Ferretti J.J."/>
        </authorList>
    </citation>
    <scope>NUCLEOTIDE SEQUENCE [LARGE SCALE GENOMIC DNA]</scope>
    <source>
        <strain>ATCC 700610 / UA159</strain>
    </source>
</reference>
<feature type="chain" id="PRO_0000098478" description="Isoleucine--tRNA ligase">
    <location>
        <begin position="1"/>
        <end position="930"/>
    </location>
</feature>
<feature type="short sequence motif" description="'HIGH' region">
    <location>
        <begin position="57"/>
        <end position="67"/>
    </location>
</feature>
<feature type="short sequence motif" description="'KMSKS' region">
    <location>
        <begin position="595"/>
        <end position="599"/>
    </location>
</feature>
<feature type="binding site" evidence="1">
    <location>
        <position position="554"/>
    </location>
    <ligand>
        <name>L-isoleucyl-5'-AMP</name>
        <dbReference type="ChEBI" id="CHEBI:178002"/>
    </ligand>
</feature>
<feature type="binding site" evidence="1">
    <location>
        <position position="598"/>
    </location>
    <ligand>
        <name>ATP</name>
        <dbReference type="ChEBI" id="CHEBI:30616"/>
    </ligand>
</feature>
<feature type="binding site" evidence="1">
    <location>
        <position position="888"/>
    </location>
    <ligand>
        <name>Zn(2+)</name>
        <dbReference type="ChEBI" id="CHEBI:29105"/>
    </ligand>
</feature>
<feature type="binding site" evidence="1">
    <location>
        <position position="891"/>
    </location>
    <ligand>
        <name>Zn(2+)</name>
        <dbReference type="ChEBI" id="CHEBI:29105"/>
    </ligand>
</feature>
<feature type="binding site" evidence="1">
    <location>
        <position position="908"/>
    </location>
    <ligand>
        <name>Zn(2+)</name>
        <dbReference type="ChEBI" id="CHEBI:29105"/>
    </ligand>
</feature>
<feature type="binding site" evidence="1">
    <location>
        <position position="911"/>
    </location>
    <ligand>
        <name>Zn(2+)</name>
        <dbReference type="ChEBI" id="CHEBI:29105"/>
    </ligand>
</feature>
<proteinExistence type="inferred from homology"/>
<accession>Q8DVD3</accession>
<sequence length="930" mass="105853">MKLKETLNLGKTAFPMRAGLPNKEPQWQKQWDEANIYAKRQELNANKPAFFLHDGPPYANGNIHVGHALNKISKDIIIRSKSMSGFRAPYIPGWDTHGLPIEQVLAKKGVKRKEIDLADYLDMCRQYALSQVDKQRQDFKRLGVSGDWENPYITLVPKYEAAQIRVFGAMADKGYIYHGAKPVYWSWSSESALAEAEIEYHDIDSTSLYYANRVKDGKDILDTDTYIVVWTTTPFTITASRGLTVGPDIDYVVVKPANDERKFLVAQALLSELAERFAWDNPQVLATHKGIELDRIVTIHPWDDNVEELVMNGDHVTLDSGTGIVHTAPGFGEDDYNVGVKYGLDVVVTVNERGIMMENAGPDFEGQFYDKVLPTVKEKLGDLLLASEVITHSYPFDWRTKKPIIWRAVPQWFASVSKFRQDILDEIDKVHFYPAWGKTRLYNMIRDRGDWVISRQRAWGVPLPIFYAEDGTAIMTKEVTDHIANLFEEHGSVIWWQREAKDLLPEGFTHPGSPNGEFTKENDIMDVWFDSGSSWNGVLNTREDLGYPADLYLEGSDQYRGWFNSSLITSVAVNGHAPYKSVLSQGFVLDGKGEKMSKSKGNIISPNDVAKQYGAEILRLWVASVDTDSDVRVSMEILGQVSETYRKIRNTLRFLIANTTDFNPYINKIAFEDLRSVDKYMLIKFNQLVSVINRAYSHYDFMTIYKAVVNFVTVDLSAFYLDFAKDVVYIEAADDLARRQMQTVFYEILVNITKLLTPILPHTSEEIWSYLEHEEEAFVQLAEMPEAQEFANQDEILDTWSAFMSLRDQAQKALEEARNAKIIGKSLEAHLTVYASEEVKTLLTALDSNIAQLLIVSQLTVTQEQAPKNALVFEDVAFSVEHARGHVCDRCRRIDETVKERPYHVTICNHCAAIVENHFPEAVRQGFESK</sequence>